<name>OBG_KLEP7</name>
<accession>A6TEK2</accession>
<keyword id="KW-0963">Cytoplasm</keyword>
<keyword id="KW-0342">GTP-binding</keyword>
<keyword id="KW-0378">Hydrolase</keyword>
<keyword id="KW-0460">Magnesium</keyword>
<keyword id="KW-0479">Metal-binding</keyword>
<keyword id="KW-0547">Nucleotide-binding</keyword>
<proteinExistence type="inferred from homology"/>
<evidence type="ECO:0000255" key="1">
    <source>
        <dbReference type="HAMAP-Rule" id="MF_01454"/>
    </source>
</evidence>
<evidence type="ECO:0000255" key="2">
    <source>
        <dbReference type="PROSITE-ProRule" id="PRU01231"/>
    </source>
</evidence>
<evidence type="ECO:0000256" key="3">
    <source>
        <dbReference type="SAM" id="MobiDB-lite"/>
    </source>
</evidence>
<feature type="chain" id="PRO_0000385987" description="GTPase Obg">
    <location>
        <begin position="1"/>
        <end position="392"/>
    </location>
</feature>
<feature type="domain" description="Obg" evidence="2">
    <location>
        <begin position="1"/>
        <end position="159"/>
    </location>
</feature>
<feature type="domain" description="OBG-type G" evidence="1">
    <location>
        <begin position="160"/>
        <end position="333"/>
    </location>
</feature>
<feature type="region of interest" description="Disordered" evidence="3">
    <location>
        <begin position="127"/>
        <end position="148"/>
    </location>
</feature>
<feature type="region of interest" description="Disordered" evidence="3">
    <location>
        <begin position="362"/>
        <end position="392"/>
    </location>
</feature>
<feature type="compositionally biased region" description="Polar residues" evidence="3">
    <location>
        <begin position="129"/>
        <end position="143"/>
    </location>
</feature>
<feature type="compositionally biased region" description="Acidic residues" evidence="3">
    <location>
        <begin position="362"/>
        <end position="386"/>
    </location>
</feature>
<feature type="binding site" evidence="1">
    <location>
        <begin position="166"/>
        <end position="173"/>
    </location>
    <ligand>
        <name>GTP</name>
        <dbReference type="ChEBI" id="CHEBI:37565"/>
    </ligand>
</feature>
<feature type="binding site" evidence="1">
    <location>
        <position position="173"/>
    </location>
    <ligand>
        <name>Mg(2+)</name>
        <dbReference type="ChEBI" id="CHEBI:18420"/>
    </ligand>
</feature>
<feature type="binding site" evidence="1">
    <location>
        <begin position="191"/>
        <end position="195"/>
    </location>
    <ligand>
        <name>GTP</name>
        <dbReference type="ChEBI" id="CHEBI:37565"/>
    </ligand>
</feature>
<feature type="binding site" evidence="1">
    <location>
        <position position="193"/>
    </location>
    <ligand>
        <name>Mg(2+)</name>
        <dbReference type="ChEBI" id="CHEBI:18420"/>
    </ligand>
</feature>
<feature type="binding site" evidence="1">
    <location>
        <begin position="213"/>
        <end position="216"/>
    </location>
    <ligand>
        <name>GTP</name>
        <dbReference type="ChEBI" id="CHEBI:37565"/>
    </ligand>
</feature>
<feature type="binding site" evidence="1">
    <location>
        <begin position="283"/>
        <end position="286"/>
    </location>
    <ligand>
        <name>GTP</name>
        <dbReference type="ChEBI" id="CHEBI:37565"/>
    </ligand>
</feature>
<feature type="binding site" evidence="1">
    <location>
        <begin position="314"/>
        <end position="316"/>
    </location>
    <ligand>
        <name>GTP</name>
        <dbReference type="ChEBI" id="CHEBI:37565"/>
    </ligand>
</feature>
<comment type="function">
    <text evidence="1">An essential GTPase which binds GTP, GDP and possibly (p)ppGpp with moderate affinity, with high nucleotide exchange rates and a fairly low GTP hydrolysis rate. Plays a role in control of the cell cycle, stress response, ribosome biogenesis and in those bacteria that undergo differentiation, in morphogenesis control.</text>
</comment>
<comment type="cofactor">
    <cofactor evidence="1">
        <name>Mg(2+)</name>
        <dbReference type="ChEBI" id="CHEBI:18420"/>
    </cofactor>
</comment>
<comment type="subunit">
    <text evidence="1">Monomer.</text>
</comment>
<comment type="subcellular location">
    <subcellularLocation>
        <location evidence="1">Cytoplasm</location>
    </subcellularLocation>
</comment>
<comment type="similarity">
    <text evidence="1">Belongs to the TRAFAC class OBG-HflX-like GTPase superfamily. OBG GTPase family.</text>
</comment>
<gene>
    <name evidence="1" type="primary">obg</name>
    <name type="ordered locus">KPN78578_35620</name>
    <name type="ORF">KPN_03593</name>
</gene>
<organism>
    <name type="scientific">Klebsiella pneumoniae subsp. pneumoniae (strain ATCC 700721 / MGH 78578)</name>
    <dbReference type="NCBI Taxonomy" id="272620"/>
    <lineage>
        <taxon>Bacteria</taxon>
        <taxon>Pseudomonadati</taxon>
        <taxon>Pseudomonadota</taxon>
        <taxon>Gammaproteobacteria</taxon>
        <taxon>Enterobacterales</taxon>
        <taxon>Enterobacteriaceae</taxon>
        <taxon>Klebsiella/Raoultella group</taxon>
        <taxon>Klebsiella</taxon>
        <taxon>Klebsiella pneumoniae complex</taxon>
    </lineage>
</organism>
<sequence length="392" mass="43577">MKFVDEATILVVAGDGGNGCVSFRREKYIPKGGPDGGDGGDGGDVWLEADENLNTLIDYRFEKSFRAERGQNGQSRDCTGKRGKDVTVKVPVGTRVIDQGTGETMGDMTKHGQRLMVAKGGWHGLGNTRFKSSVNRTPRQKTMGTPGDKRDLQLELMLLADVGMLGMPNAGKSTFIRAVSAAKPKVADYPFTTLVPSLGVVRMDNEKSFVVADIPGLIEGAAEGAGLGIRFLKHLERCRVLLHLIDIDPIDGSDPVENARIIIGELEKYSEKLASKPRWLVFNKIDLMDKAEAEAKAKAIAEALGWEEKFYLISAASQQGVKELCWDVMTFIIENPIVQAEEEQKPEKVEFMWDDYHRQQLEEAEAEAEDDEDWDDDWDEDDEEGVEFIYKR</sequence>
<reference key="1">
    <citation type="submission" date="2006-09" db="EMBL/GenBank/DDBJ databases">
        <authorList>
            <consortium name="The Klebsiella pneumonia Genome Sequencing Project"/>
            <person name="McClelland M."/>
            <person name="Sanderson E.K."/>
            <person name="Spieth J."/>
            <person name="Clifton W.S."/>
            <person name="Latreille P."/>
            <person name="Sabo A."/>
            <person name="Pepin K."/>
            <person name="Bhonagiri V."/>
            <person name="Porwollik S."/>
            <person name="Ali J."/>
            <person name="Wilson R.K."/>
        </authorList>
    </citation>
    <scope>NUCLEOTIDE SEQUENCE [LARGE SCALE GENOMIC DNA]</scope>
    <source>
        <strain>ATCC 700721 / MGH 78578</strain>
    </source>
</reference>
<dbReference type="EC" id="3.6.5.-" evidence="1"/>
<dbReference type="EMBL" id="CP000647">
    <property type="protein sequence ID" value="ABR78986.1"/>
    <property type="molecule type" value="Genomic_DNA"/>
</dbReference>
<dbReference type="SMR" id="A6TEK2"/>
<dbReference type="STRING" id="272620.KPN_03593"/>
<dbReference type="PaxDb" id="272620-KPN_03593"/>
<dbReference type="EnsemblBacteria" id="ABR78986">
    <property type="protein sequence ID" value="ABR78986"/>
    <property type="gene ID" value="KPN_03593"/>
</dbReference>
<dbReference type="KEGG" id="kpn:KPN_03593"/>
<dbReference type="HOGENOM" id="CLU_011747_2_0_6"/>
<dbReference type="Proteomes" id="UP000000265">
    <property type="component" value="Chromosome"/>
</dbReference>
<dbReference type="GO" id="GO:0005737">
    <property type="term" value="C:cytoplasm"/>
    <property type="evidence" value="ECO:0007669"/>
    <property type="project" value="UniProtKB-SubCell"/>
</dbReference>
<dbReference type="GO" id="GO:0005525">
    <property type="term" value="F:GTP binding"/>
    <property type="evidence" value="ECO:0007669"/>
    <property type="project" value="UniProtKB-UniRule"/>
</dbReference>
<dbReference type="GO" id="GO:0003924">
    <property type="term" value="F:GTPase activity"/>
    <property type="evidence" value="ECO:0007669"/>
    <property type="project" value="UniProtKB-UniRule"/>
</dbReference>
<dbReference type="GO" id="GO:0000287">
    <property type="term" value="F:magnesium ion binding"/>
    <property type="evidence" value="ECO:0007669"/>
    <property type="project" value="InterPro"/>
</dbReference>
<dbReference type="GO" id="GO:0042254">
    <property type="term" value="P:ribosome biogenesis"/>
    <property type="evidence" value="ECO:0007669"/>
    <property type="project" value="UniProtKB-UniRule"/>
</dbReference>
<dbReference type="CDD" id="cd01898">
    <property type="entry name" value="Obg"/>
    <property type="match status" value="1"/>
</dbReference>
<dbReference type="FunFam" id="2.70.210.12:FF:000001">
    <property type="entry name" value="GTPase Obg"/>
    <property type="match status" value="1"/>
</dbReference>
<dbReference type="FunFam" id="3.40.50.300:FF:000185">
    <property type="entry name" value="GTPase Obg"/>
    <property type="match status" value="1"/>
</dbReference>
<dbReference type="Gene3D" id="2.70.210.12">
    <property type="entry name" value="GTP1/OBG domain"/>
    <property type="match status" value="1"/>
</dbReference>
<dbReference type="Gene3D" id="3.40.50.300">
    <property type="entry name" value="P-loop containing nucleotide triphosphate hydrolases"/>
    <property type="match status" value="1"/>
</dbReference>
<dbReference type="HAMAP" id="MF_01454">
    <property type="entry name" value="GTPase_Obg"/>
    <property type="match status" value="1"/>
</dbReference>
<dbReference type="InterPro" id="IPR031167">
    <property type="entry name" value="G_OBG"/>
</dbReference>
<dbReference type="InterPro" id="IPR006073">
    <property type="entry name" value="GTP-bd"/>
</dbReference>
<dbReference type="InterPro" id="IPR014100">
    <property type="entry name" value="GTP-bd_Obg/CgtA"/>
</dbReference>
<dbReference type="InterPro" id="IPR006074">
    <property type="entry name" value="GTP1-OBG_CS"/>
</dbReference>
<dbReference type="InterPro" id="IPR006169">
    <property type="entry name" value="GTP1_OBG_dom"/>
</dbReference>
<dbReference type="InterPro" id="IPR036726">
    <property type="entry name" value="GTP1_OBG_dom_sf"/>
</dbReference>
<dbReference type="InterPro" id="IPR045086">
    <property type="entry name" value="OBG_GTPase"/>
</dbReference>
<dbReference type="InterPro" id="IPR027417">
    <property type="entry name" value="P-loop_NTPase"/>
</dbReference>
<dbReference type="NCBIfam" id="TIGR02729">
    <property type="entry name" value="Obg_CgtA"/>
    <property type="match status" value="1"/>
</dbReference>
<dbReference type="NCBIfam" id="NF008955">
    <property type="entry name" value="PRK12297.1"/>
    <property type="match status" value="1"/>
</dbReference>
<dbReference type="NCBIfam" id="NF008956">
    <property type="entry name" value="PRK12299.1"/>
    <property type="match status" value="1"/>
</dbReference>
<dbReference type="PANTHER" id="PTHR11702">
    <property type="entry name" value="DEVELOPMENTALLY REGULATED GTP-BINDING PROTEIN-RELATED"/>
    <property type="match status" value="1"/>
</dbReference>
<dbReference type="PANTHER" id="PTHR11702:SF31">
    <property type="entry name" value="MITOCHONDRIAL RIBOSOME-ASSOCIATED GTPASE 2"/>
    <property type="match status" value="1"/>
</dbReference>
<dbReference type="Pfam" id="PF01018">
    <property type="entry name" value="GTP1_OBG"/>
    <property type="match status" value="1"/>
</dbReference>
<dbReference type="Pfam" id="PF01926">
    <property type="entry name" value="MMR_HSR1"/>
    <property type="match status" value="1"/>
</dbReference>
<dbReference type="PIRSF" id="PIRSF002401">
    <property type="entry name" value="GTP_bd_Obg/CgtA"/>
    <property type="match status" value="1"/>
</dbReference>
<dbReference type="PRINTS" id="PR00326">
    <property type="entry name" value="GTP1OBG"/>
</dbReference>
<dbReference type="SUPFAM" id="SSF82051">
    <property type="entry name" value="Obg GTP-binding protein N-terminal domain"/>
    <property type="match status" value="1"/>
</dbReference>
<dbReference type="SUPFAM" id="SSF52540">
    <property type="entry name" value="P-loop containing nucleoside triphosphate hydrolases"/>
    <property type="match status" value="1"/>
</dbReference>
<dbReference type="PROSITE" id="PS51710">
    <property type="entry name" value="G_OBG"/>
    <property type="match status" value="1"/>
</dbReference>
<dbReference type="PROSITE" id="PS00905">
    <property type="entry name" value="GTP1_OBG"/>
    <property type="match status" value="1"/>
</dbReference>
<dbReference type="PROSITE" id="PS51883">
    <property type="entry name" value="OBG"/>
    <property type="match status" value="1"/>
</dbReference>
<protein>
    <recommendedName>
        <fullName evidence="1">GTPase Obg</fullName>
        <ecNumber evidence="1">3.6.5.-</ecNumber>
    </recommendedName>
    <alternativeName>
        <fullName evidence="1">GTP-binding protein Obg</fullName>
    </alternativeName>
</protein>